<evidence type="ECO:0000250" key="1"/>
<evidence type="ECO:0000250" key="2">
    <source>
        <dbReference type="UniProtKB" id="P01375"/>
    </source>
</evidence>
<evidence type="ECO:0000250" key="3">
    <source>
        <dbReference type="UniProtKB" id="P06804"/>
    </source>
</evidence>
<evidence type="ECO:0000255" key="4"/>
<evidence type="ECO:0000255" key="5">
    <source>
        <dbReference type="PROSITE-ProRule" id="PRU01387"/>
    </source>
</evidence>
<evidence type="ECO:0000305" key="6"/>
<comment type="function">
    <text evidence="2 3">Cytokine that binds to TNFRSF1A/TNFR1 and TNFRSF1B/TNFBR. It is mainly secreted by macrophages and can induce cell death of certain tumor cell lines. It is potent pyrogen causing fever by direct action or by stimulation of interleukin-1 secretion and is implicated in the induction of cachexia, Under certain conditions it can stimulate cell proliferation and induce cell differentiation (By similarity). Induces insulin resistance in adipocytes via inhibition of insulin-induced IRS1 tyrosine phosphorylation and insulin-induced glucose uptake. Induces GKAP42 protein degradation in adipocytes which is partially responsible for TNF-induced insulin resistance (By similarity). Plays a role in angiogenesis by inducing VEGF production synergistically with IL1B and IL6 (By similarity).</text>
</comment>
<comment type="function">
    <text evidence="2">The TNF intracellular domain (ICD) form induces IL12 production in dendritic cells.</text>
</comment>
<comment type="subunit">
    <text evidence="1">Homotrimer. Interacts with SPPL2B (By similarity).</text>
</comment>
<comment type="subcellular location">
    <subcellularLocation>
        <location evidence="1">Cell membrane</location>
        <topology evidence="1">Single-pass type II membrane protein</topology>
    </subcellularLocation>
</comment>
<comment type="subcellular location">
    <molecule>Tumor necrosis factor, membrane form</molecule>
    <subcellularLocation>
        <location evidence="1">Membrane</location>
        <topology evidence="1">Single-pass type II membrane protein</topology>
    </subcellularLocation>
</comment>
<comment type="subcellular location">
    <molecule>Tumor necrosis factor, soluble form</molecule>
    <subcellularLocation>
        <location evidence="1">Secreted</location>
    </subcellularLocation>
</comment>
<comment type="subcellular location">
    <molecule>C-domain 1</molecule>
    <subcellularLocation>
        <location evidence="1">Secreted</location>
    </subcellularLocation>
</comment>
<comment type="subcellular location">
    <molecule>C-domain 2</molecule>
    <subcellularLocation>
        <location evidence="1">Secreted</location>
    </subcellularLocation>
</comment>
<comment type="PTM">
    <text evidence="1">The soluble form derives from the membrane form by proteolytic processing. The membrane-bound form is further proteolytically processed by SPPL2A or SPPL2B through regulated intramembrane proteolysis producing TNF intracellular domains (ICD1 and ICD2) released in the cytosol and TNF C-domain 1 and C-domain 2 secreted into the extracellular space (By similarity).</text>
</comment>
<comment type="PTM">
    <text evidence="1">The membrane form, but not the soluble form, is phosphorylated on serine residues. Dephosphorylation of the membrane form occurs by binding to soluble TNFRSF1A/TNFR1 (By similarity).</text>
</comment>
<comment type="PTM">
    <text evidence="1">O-glycosylated; glycans contain galactose, N-acetylgalactosamine and N-acetylneuraminic acid.</text>
</comment>
<comment type="PTM">
    <molecule>Tumor necrosis factor, soluble form</molecule>
    <text evidence="2">The soluble form is demyristoylated by SIRT6, promoting its secretion.</text>
</comment>
<comment type="similarity">
    <text evidence="6">Belongs to the tumor necrosis factor family.</text>
</comment>
<accession>Q8WNR1</accession>
<gene>
    <name type="primary">TNF</name>
    <name type="synonym">TNFA</name>
    <name type="synonym">TNFSF2</name>
</gene>
<dbReference type="EMBL" id="AF320323">
    <property type="protein sequence ID" value="AAL56946.1"/>
    <property type="molecule type" value="mRNA"/>
</dbReference>
<dbReference type="RefSeq" id="XP_022421815.1">
    <property type="nucleotide sequence ID" value="XM_022566107.2"/>
</dbReference>
<dbReference type="SMR" id="Q8WNR1"/>
<dbReference type="FunCoup" id="Q8WNR1">
    <property type="interactions" value="779"/>
</dbReference>
<dbReference type="STRING" id="9749.Q8WNR1"/>
<dbReference type="GlyCosmos" id="Q8WNR1">
    <property type="glycosylation" value="2 sites, No reported glycans"/>
</dbReference>
<dbReference type="GeneID" id="111170657"/>
<dbReference type="InParanoid" id="Q8WNR1"/>
<dbReference type="Proteomes" id="UP000248483">
    <property type="component" value="Unplaced"/>
</dbReference>
<dbReference type="GO" id="GO:0009897">
    <property type="term" value="C:external side of plasma membrane"/>
    <property type="evidence" value="ECO:0007669"/>
    <property type="project" value="Ensembl"/>
</dbReference>
<dbReference type="GO" id="GO:0005615">
    <property type="term" value="C:extracellular space"/>
    <property type="evidence" value="ECO:0007669"/>
    <property type="project" value="UniProtKB-KW"/>
</dbReference>
<dbReference type="GO" id="GO:0045121">
    <property type="term" value="C:membrane raft"/>
    <property type="evidence" value="ECO:0007669"/>
    <property type="project" value="Ensembl"/>
</dbReference>
<dbReference type="GO" id="GO:0001891">
    <property type="term" value="C:phagocytic cup"/>
    <property type="evidence" value="ECO:0007669"/>
    <property type="project" value="Ensembl"/>
</dbReference>
<dbReference type="GO" id="GO:0055037">
    <property type="term" value="C:recycling endosome"/>
    <property type="evidence" value="ECO:0007669"/>
    <property type="project" value="Ensembl"/>
</dbReference>
<dbReference type="GO" id="GO:0005125">
    <property type="term" value="F:cytokine activity"/>
    <property type="evidence" value="ECO:0007669"/>
    <property type="project" value="UniProtKB-KW"/>
</dbReference>
<dbReference type="GO" id="GO:0038177">
    <property type="term" value="F:death receptor agonist activity"/>
    <property type="evidence" value="ECO:0007669"/>
    <property type="project" value="Ensembl"/>
</dbReference>
<dbReference type="GO" id="GO:0042802">
    <property type="term" value="F:identical protein binding"/>
    <property type="evidence" value="ECO:0007669"/>
    <property type="project" value="Ensembl"/>
</dbReference>
<dbReference type="GO" id="GO:0002020">
    <property type="term" value="F:protease binding"/>
    <property type="evidence" value="ECO:0007669"/>
    <property type="project" value="Ensembl"/>
</dbReference>
<dbReference type="GO" id="GO:0000976">
    <property type="term" value="F:transcription cis-regulatory region binding"/>
    <property type="evidence" value="ECO:0007669"/>
    <property type="project" value="Ensembl"/>
</dbReference>
<dbReference type="GO" id="GO:0005164">
    <property type="term" value="F:tumor necrosis factor receptor binding"/>
    <property type="evidence" value="ECO:0007669"/>
    <property type="project" value="Ensembl"/>
</dbReference>
<dbReference type="GO" id="GO:0140374">
    <property type="term" value="P:antiviral innate immune response"/>
    <property type="evidence" value="ECO:0007669"/>
    <property type="project" value="Ensembl"/>
</dbReference>
<dbReference type="GO" id="GO:0071230">
    <property type="term" value="P:cellular response to amino acid stimulus"/>
    <property type="evidence" value="ECO:0007669"/>
    <property type="project" value="Ensembl"/>
</dbReference>
<dbReference type="GO" id="GO:0071479">
    <property type="term" value="P:cellular response to ionizing radiation"/>
    <property type="evidence" value="ECO:0007669"/>
    <property type="project" value="Ensembl"/>
</dbReference>
<dbReference type="GO" id="GO:0071222">
    <property type="term" value="P:cellular response to lipopolysaccharide"/>
    <property type="evidence" value="ECO:0007669"/>
    <property type="project" value="Ensembl"/>
</dbReference>
<dbReference type="GO" id="GO:0071316">
    <property type="term" value="P:cellular response to nicotine"/>
    <property type="evidence" value="ECO:0007669"/>
    <property type="project" value="Ensembl"/>
</dbReference>
<dbReference type="GO" id="GO:0071346">
    <property type="term" value="P:cellular response to type II interferon"/>
    <property type="evidence" value="ECO:0007669"/>
    <property type="project" value="Ensembl"/>
</dbReference>
<dbReference type="GO" id="GO:0002439">
    <property type="term" value="P:chronic inflammatory response to antigenic stimulus"/>
    <property type="evidence" value="ECO:0007669"/>
    <property type="project" value="Ensembl"/>
</dbReference>
<dbReference type="GO" id="GO:0050830">
    <property type="term" value="P:defense response to Gram-positive bacterium"/>
    <property type="evidence" value="ECO:0007669"/>
    <property type="project" value="Ensembl"/>
</dbReference>
<dbReference type="GO" id="GO:0048566">
    <property type="term" value="P:embryonic digestive tract development"/>
    <property type="evidence" value="ECO:0007669"/>
    <property type="project" value="Ensembl"/>
</dbReference>
<dbReference type="GO" id="GO:0072577">
    <property type="term" value="P:endothelial cell apoptotic process"/>
    <property type="evidence" value="ECO:0007669"/>
    <property type="project" value="Ensembl"/>
</dbReference>
<dbReference type="GO" id="GO:0060664">
    <property type="term" value="P:epithelial cell proliferation involved in salivary gland morphogenesis"/>
    <property type="evidence" value="ECO:0007669"/>
    <property type="project" value="Ensembl"/>
</dbReference>
<dbReference type="GO" id="GO:0030198">
    <property type="term" value="P:extracellular matrix organization"/>
    <property type="evidence" value="ECO:0007669"/>
    <property type="project" value="Ensembl"/>
</dbReference>
<dbReference type="GO" id="GO:0008625">
    <property type="term" value="P:extrinsic apoptotic signaling pathway via death domain receptors"/>
    <property type="evidence" value="ECO:0007669"/>
    <property type="project" value="Ensembl"/>
</dbReference>
<dbReference type="GO" id="GO:0006006">
    <property type="term" value="P:glucose metabolic process"/>
    <property type="evidence" value="ECO:0007669"/>
    <property type="project" value="Ensembl"/>
</dbReference>
<dbReference type="GO" id="GO:0006959">
    <property type="term" value="P:humoral immune response"/>
    <property type="evidence" value="ECO:0007669"/>
    <property type="project" value="Ensembl"/>
</dbReference>
<dbReference type="GO" id="GO:0090594">
    <property type="term" value="P:inflammatory response to wounding"/>
    <property type="evidence" value="ECO:0007669"/>
    <property type="project" value="Ensembl"/>
</dbReference>
<dbReference type="GO" id="GO:0008630">
    <property type="term" value="P:intrinsic apoptotic signaling pathway in response to DNA damage"/>
    <property type="evidence" value="ECO:0007669"/>
    <property type="project" value="Ensembl"/>
</dbReference>
<dbReference type="GO" id="GO:0007254">
    <property type="term" value="P:JNK cascade"/>
    <property type="evidence" value="ECO:0007669"/>
    <property type="project" value="Ensembl"/>
</dbReference>
<dbReference type="GO" id="GO:0050901">
    <property type="term" value="P:leukocyte tethering or rolling"/>
    <property type="evidence" value="ECO:0007669"/>
    <property type="project" value="Ensembl"/>
</dbReference>
<dbReference type="GO" id="GO:0002281">
    <property type="term" value="P:macrophage activation involved in immune response"/>
    <property type="evidence" value="ECO:0007669"/>
    <property type="project" value="Ensembl"/>
</dbReference>
<dbReference type="GO" id="GO:0001774">
    <property type="term" value="P:microglial cell activation"/>
    <property type="evidence" value="ECO:0007669"/>
    <property type="project" value="Ensembl"/>
</dbReference>
<dbReference type="GO" id="GO:0097527">
    <property type="term" value="P:necroptotic signaling pathway"/>
    <property type="evidence" value="ECO:0000250"/>
    <property type="project" value="CAFA"/>
</dbReference>
<dbReference type="GO" id="GO:1900222">
    <property type="term" value="P:negative regulation of amyloid-beta clearance"/>
    <property type="evidence" value="ECO:0007669"/>
    <property type="project" value="Ensembl"/>
</dbReference>
<dbReference type="GO" id="GO:1903347">
    <property type="term" value="P:negative regulation of bicellular tight junction assembly"/>
    <property type="evidence" value="ECO:0007669"/>
    <property type="project" value="Ensembl"/>
</dbReference>
<dbReference type="GO" id="GO:0043537">
    <property type="term" value="P:negative regulation of blood vessel endothelial cell migration"/>
    <property type="evidence" value="ECO:0007669"/>
    <property type="project" value="Ensembl"/>
</dbReference>
<dbReference type="GO" id="GO:0061048">
    <property type="term" value="P:negative regulation of branching involved in lung morphogenesis"/>
    <property type="evidence" value="ECO:0007669"/>
    <property type="project" value="Ensembl"/>
</dbReference>
<dbReference type="GO" id="GO:0002719">
    <property type="term" value="P:negative regulation of cytokine production involved in immune response"/>
    <property type="evidence" value="ECO:0007669"/>
    <property type="project" value="Ensembl"/>
</dbReference>
<dbReference type="GO" id="GO:0046325">
    <property type="term" value="P:negative regulation of D-glucose import"/>
    <property type="evidence" value="ECO:0007669"/>
    <property type="project" value="Ensembl"/>
</dbReference>
<dbReference type="GO" id="GO:0001937">
    <property type="term" value="P:negative regulation of endothelial cell proliferation"/>
    <property type="evidence" value="ECO:0007669"/>
    <property type="project" value="Ensembl"/>
</dbReference>
<dbReference type="GO" id="GO:2001240">
    <property type="term" value="P:negative regulation of extrinsic apoptotic signaling pathway in absence of ligand"/>
    <property type="evidence" value="ECO:0007669"/>
    <property type="project" value="Ensembl"/>
</dbReference>
<dbReference type="GO" id="GO:0032715">
    <property type="term" value="P:negative regulation of interleukin-6 production"/>
    <property type="evidence" value="ECO:0007669"/>
    <property type="project" value="Ensembl"/>
</dbReference>
<dbReference type="GO" id="GO:0050995">
    <property type="term" value="P:negative regulation of lipid catabolic process"/>
    <property type="evidence" value="ECO:0007669"/>
    <property type="project" value="Ensembl"/>
</dbReference>
<dbReference type="GO" id="GO:0045930">
    <property type="term" value="P:negative regulation of mitotic cell cycle"/>
    <property type="evidence" value="ECO:0007669"/>
    <property type="project" value="Ensembl"/>
</dbReference>
<dbReference type="GO" id="GO:0045662">
    <property type="term" value="P:negative regulation of myoblast differentiation"/>
    <property type="evidence" value="ECO:0007669"/>
    <property type="project" value="Ensembl"/>
</dbReference>
<dbReference type="GO" id="GO:0045668">
    <property type="term" value="P:negative regulation of osteoblast differentiation"/>
    <property type="evidence" value="ECO:0007669"/>
    <property type="project" value="Ensembl"/>
</dbReference>
<dbReference type="GO" id="GO:0043242">
    <property type="term" value="P:negative regulation of protein-containing complex disassembly"/>
    <property type="evidence" value="ECO:0000250"/>
    <property type="project" value="UniProtKB"/>
</dbReference>
<dbReference type="GO" id="GO:0000122">
    <property type="term" value="P:negative regulation of transcription by RNA polymerase II"/>
    <property type="evidence" value="ECO:0007669"/>
    <property type="project" value="Ensembl"/>
</dbReference>
<dbReference type="GO" id="GO:0061044">
    <property type="term" value="P:negative regulation of vascular wound healing"/>
    <property type="evidence" value="ECO:0007669"/>
    <property type="project" value="Ensembl"/>
</dbReference>
<dbReference type="GO" id="GO:0045071">
    <property type="term" value="P:negative regulation of viral genome replication"/>
    <property type="evidence" value="ECO:0007669"/>
    <property type="project" value="Ensembl"/>
</dbReference>
<dbReference type="GO" id="GO:0030316">
    <property type="term" value="P:osteoclast differentiation"/>
    <property type="evidence" value="ECO:0007669"/>
    <property type="project" value="Ensembl"/>
</dbReference>
<dbReference type="GO" id="GO:0043491">
    <property type="term" value="P:phosphatidylinositol 3-kinase/protein kinase B signal transduction"/>
    <property type="evidence" value="ECO:0007669"/>
    <property type="project" value="Ensembl"/>
</dbReference>
<dbReference type="GO" id="GO:1902004">
    <property type="term" value="P:positive regulation of amyloid-beta formation"/>
    <property type="evidence" value="ECO:0007669"/>
    <property type="project" value="Ensembl"/>
</dbReference>
<dbReference type="GO" id="GO:0043065">
    <property type="term" value="P:positive regulation of apoptotic process"/>
    <property type="evidence" value="ECO:0000250"/>
    <property type="project" value="UniProtKB"/>
</dbReference>
<dbReference type="GO" id="GO:2000334">
    <property type="term" value="P:positive regulation of blood microparticle formation"/>
    <property type="evidence" value="ECO:0007669"/>
    <property type="project" value="Ensembl"/>
</dbReference>
<dbReference type="GO" id="GO:0070886">
    <property type="term" value="P:positive regulation of calcineurin-NFAT signaling cascade"/>
    <property type="evidence" value="ECO:0007669"/>
    <property type="project" value="Ensembl"/>
</dbReference>
<dbReference type="GO" id="GO:0043123">
    <property type="term" value="P:positive regulation of canonical NF-kappaB signal transduction"/>
    <property type="evidence" value="ECO:0007669"/>
    <property type="project" value="Ensembl"/>
</dbReference>
<dbReference type="GO" id="GO:2000343">
    <property type="term" value="P:positive regulation of chemokine (C-X-C motif) ligand 2 production"/>
    <property type="evidence" value="ECO:0007669"/>
    <property type="project" value="Ensembl"/>
</dbReference>
<dbReference type="GO" id="GO:0002876">
    <property type="term" value="P:positive regulation of chronic inflammatory response to antigenic stimulus"/>
    <property type="evidence" value="ECO:0007669"/>
    <property type="project" value="Ensembl"/>
</dbReference>
<dbReference type="GO" id="GO:1900017">
    <property type="term" value="P:positive regulation of cytokine production involved in inflammatory response"/>
    <property type="evidence" value="ECO:0007669"/>
    <property type="project" value="Ensembl"/>
</dbReference>
<dbReference type="GO" id="GO:2001238">
    <property type="term" value="P:positive regulation of extrinsic apoptotic signaling pathway"/>
    <property type="evidence" value="ECO:0007669"/>
    <property type="project" value="TreeGrafter"/>
</dbReference>
<dbReference type="GO" id="GO:0031622">
    <property type="term" value="P:positive regulation of fever generation"/>
    <property type="evidence" value="ECO:0007669"/>
    <property type="project" value="Ensembl"/>
</dbReference>
<dbReference type="GO" id="GO:0060252">
    <property type="term" value="P:positive regulation of glial cell proliferation"/>
    <property type="evidence" value="ECO:0007669"/>
    <property type="project" value="Ensembl"/>
</dbReference>
<dbReference type="GO" id="GO:0051798">
    <property type="term" value="P:positive regulation of hair follicle development"/>
    <property type="evidence" value="ECO:0007669"/>
    <property type="project" value="Ensembl"/>
</dbReference>
<dbReference type="GO" id="GO:0034116">
    <property type="term" value="P:positive regulation of heterotypic cell-cell adhesion"/>
    <property type="evidence" value="ECO:0007669"/>
    <property type="project" value="Ensembl"/>
</dbReference>
<dbReference type="GO" id="GO:0002925">
    <property type="term" value="P:positive regulation of humoral immune response mediated by circulating immunoglobulin"/>
    <property type="evidence" value="ECO:0007669"/>
    <property type="project" value="Ensembl"/>
</dbReference>
<dbReference type="GO" id="GO:0032731">
    <property type="term" value="P:positive regulation of interleukin-1 beta production"/>
    <property type="evidence" value="ECO:0007669"/>
    <property type="project" value="Ensembl"/>
</dbReference>
<dbReference type="GO" id="GO:0150129">
    <property type="term" value="P:positive regulation of interleukin-33 production"/>
    <property type="evidence" value="ECO:0007669"/>
    <property type="project" value="Ensembl"/>
</dbReference>
<dbReference type="GO" id="GO:0032755">
    <property type="term" value="P:positive regulation of interleukin-6 production"/>
    <property type="evidence" value="ECO:0007669"/>
    <property type="project" value="Ensembl"/>
</dbReference>
<dbReference type="GO" id="GO:0032757">
    <property type="term" value="P:positive regulation of interleukin-8 production"/>
    <property type="evidence" value="ECO:0007669"/>
    <property type="project" value="Ensembl"/>
</dbReference>
<dbReference type="GO" id="GO:0046330">
    <property type="term" value="P:positive regulation of JNK cascade"/>
    <property type="evidence" value="ECO:0007669"/>
    <property type="project" value="Ensembl"/>
</dbReference>
<dbReference type="GO" id="GO:0043507">
    <property type="term" value="P:positive regulation of JUN kinase activity"/>
    <property type="evidence" value="ECO:0000250"/>
    <property type="project" value="UniProtKB"/>
</dbReference>
<dbReference type="GO" id="GO:1904999">
    <property type="term" value="P:positive regulation of leukocyte adhesion to arterial endothelial cell"/>
    <property type="evidence" value="ECO:0007669"/>
    <property type="project" value="Ensembl"/>
</dbReference>
<dbReference type="GO" id="GO:0010744">
    <property type="term" value="P:positive regulation of macrophage derived foam cell differentiation"/>
    <property type="evidence" value="ECO:0007669"/>
    <property type="project" value="Ensembl"/>
</dbReference>
<dbReference type="GO" id="GO:0043406">
    <property type="term" value="P:positive regulation of MAP kinase activity"/>
    <property type="evidence" value="ECO:0000250"/>
    <property type="project" value="UniProtKB"/>
</dbReference>
<dbReference type="GO" id="GO:0051044">
    <property type="term" value="P:positive regulation of membrane protein ectodomain proteolysis"/>
    <property type="evidence" value="ECO:0007669"/>
    <property type="project" value="Ensembl"/>
</dbReference>
<dbReference type="GO" id="GO:1902895">
    <property type="term" value="P:positive regulation of miRNA transcription"/>
    <property type="evidence" value="ECO:0007669"/>
    <property type="project" value="Ensembl"/>
</dbReference>
<dbReference type="GO" id="GO:0043525">
    <property type="term" value="P:positive regulation of neuron apoptotic process"/>
    <property type="evidence" value="ECO:0007669"/>
    <property type="project" value="Ensembl"/>
</dbReference>
<dbReference type="GO" id="GO:0051092">
    <property type="term" value="P:positive regulation of NF-kappaB transcription factor activity"/>
    <property type="evidence" value="ECO:0000250"/>
    <property type="project" value="UniProtKB"/>
</dbReference>
<dbReference type="GO" id="GO:0045429">
    <property type="term" value="P:positive regulation of nitric oxide biosynthetic process"/>
    <property type="evidence" value="ECO:0007669"/>
    <property type="project" value="Ensembl"/>
</dbReference>
<dbReference type="GO" id="GO:1901224">
    <property type="term" value="P:positive regulation of non-canonical NF-kappaB signal transduction"/>
    <property type="evidence" value="ECO:0007669"/>
    <property type="project" value="Ensembl"/>
</dbReference>
<dbReference type="GO" id="GO:0045672">
    <property type="term" value="P:positive regulation of osteoclast differentiation"/>
    <property type="evidence" value="ECO:0007669"/>
    <property type="project" value="Ensembl"/>
</dbReference>
<dbReference type="GO" id="GO:0051897">
    <property type="term" value="P:positive regulation of phosphatidylinositol 3-kinase/protein kinase B signal transduction"/>
    <property type="evidence" value="ECO:0007669"/>
    <property type="project" value="Ensembl"/>
</dbReference>
<dbReference type="GO" id="GO:0071803">
    <property type="term" value="P:positive regulation of podosome assembly"/>
    <property type="evidence" value="ECO:0007669"/>
    <property type="project" value="Ensembl"/>
</dbReference>
<dbReference type="GO" id="GO:2000010">
    <property type="term" value="P:positive regulation of protein localization to cell surface"/>
    <property type="evidence" value="ECO:0007669"/>
    <property type="project" value="Ensembl"/>
</dbReference>
<dbReference type="GO" id="GO:1903078">
    <property type="term" value="P:positive regulation of protein localization to plasma membrane"/>
    <property type="evidence" value="ECO:0007669"/>
    <property type="project" value="Ensembl"/>
</dbReference>
<dbReference type="GO" id="GO:0001934">
    <property type="term" value="P:positive regulation of protein phosphorylation"/>
    <property type="evidence" value="ECO:0000250"/>
    <property type="project" value="UniProtKB"/>
</dbReference>
<dbReference type="GO" id="GO:0051222">
    <property type="term" value="P:positive regulation of protein transport"/>
    <property type="evidence" value="ECO:0007669"/>
    <property type="project" value="Ensembl"/>
</dbReference>
<dbReference type="GO" id="GO:0043243">
    <property type="term" value="P:positive regulation of protein-containing complex disassembly"/>
    <property type="evidence" value="ECO:0000250"/>
    <property type="project" value="UniProtKB"/>
</dbReference>
<dbReference type="GO" id="GO:0050806">
    <property type="term" value="P:positive regulation of synaptic transmission"/>
    <property type="evidence" value="ECO:0007669"/>
    <property type="project" value="Ensembl"/>
</dbReference>
<dbReference type="GO" id="GO:1901647">
    <property type="term" value="P:positive regulation of synoviocyte proliferation"/>
    <property type="evidence" value="ECO:0007669"/>
    <property type="project" value="Ensembl"/>
</dbReference>
<dbReference type="GO" id="GO:0045944">
    <property type="term" value="P:positive regulation of transcription by RNA polymerase II"/>
    <property type="evidence" value="ECO:0007669"/>
    <property type="project" value="Ensembl"/>
</dbReference>
<dbReference type="GO" id="GO:0045994">
    <property type="term" value="P:positive regulation of translational initiation by iron"/>
    <property type="evidence" value="ECO:0007669"/>
    <property type="project" value="Ensembl"/>
</dbReference>
<dbReference type="GO" id="GO:0032729">
    <property type="term" value="P:positive regulation of type II interferon production"/>
    <property type="evidence" value="ECO:0007669"/>
    <property type="project" value="Ensembl"/>
</dbReference>
<dbReference type="GO" id="GO:1904707">
    <property type="term" value="P:positive regulation of vascular associated smooth muscle cell proliferation"/>
    <property type="evidence" value="ECO:0007669"/>
    <property type="project" value="Ensembl"/>
</dbReference>
<dbReference type="GO" id="GO:0060557">
    <property type="term" value="P:positive regulation of vitamin D biosynthetic process"/>
    <property type="evidence" value="ECO:0007669"/>
    <property type="project" value="Ensembl"/>
</dbReference>
<dbReference type="GO" id="GO:0072659">
    <property type="term" value="P:protein localization to plasma membrane"/>
    <property type="evidence" value="ECO:0007669"/>
    <property type="project" value="Ensembl"/>
</dbReference>
<dbReference type="GO" id="GO:0060693">
    <property type="term" value="P:regulation of branching involved in salivary gland morphogenesis"/>
    <property type="evidence" value="ECO:0007669"/>
    <property type="project" value="Ensembl"/>
</dbReference>
<dbReference type="GO" id="GO:2000351">
    <property type="term" value="P:regulation of endothelial cell apoptotic process"/>
    <property type="evidence" value="ECO:0007669"/>
    <property type="project" value="Ensembl"/>
</dbReference>
<dbReference type="GO" id="GO:1903140">
    <property type="term" value="P:regulation of establishment of endothelial barrier"/>
    <property type="evidence" value="ECO:0007669"/>
    <property type="project" value="Ensembl"/>
</dbReference>
<dbReference type="GO" id="GO:0002637">
    <property type="term" value="P:regulation of immunoglobulin production"/>
    <property type="evidence" value="ECO:0007669"/>
    <property type="project" value="Ensembl"/>
</dbReference>
<dbReference type="GO" id="GO:0050796">
    <property type="term" value="P:regulation of insulin secretion"/>
    <property type="evidence" value="ECO:0007669"/>
    <property type="project" value="Ensembl"/>
</dbReference>
<dbReference type="GO" id="GO:1905038">
    <property type="term" value="P:regulation of membrane lipid metabolic process"/>
    <property type="evidence" value="ECO:0007669"/>
    <property type="project" value="Ensembl"/>
</dbReference>
<dbReference type="GO" id="GO:2000377">
    <property type="term" value="P:regulation of reactive oxygen species metabolic process"/>
    <property type="evidence" value="ECO:0007669"/>
    <property type="project" value="Ensembl"/>
</dbReference>
<dbReference type="GO" id="GO:0050807">
    <property type="term" value="P:regulation of synapse organization"/>
    <property type="evidence" value="ECO:0007669"/>
    <property type="project" value="Ensembl"/>
</dbReference>
<dbReference type="GO" id="GO:0051384">
    <property type="term" value="P:response to glucocorticoid"/>
    <property type="evidence" value="ECO:0007669"/>
    <property type="project" value="Ensembl"/>
</dbReference>
<dbReference type="GO" id="GO:0033209">
    <property type="term" value="P:tumor necrosis factor-mediated signaling pathway"/>
    <property type="evidence" value="ECO:0007669"/>
    <property type="project" value="Ensembl"/>
</dbReference>
<dbReference type="GO" id="GO:0010573">
    <property type="term" value="P:vascular endothelial growth factor production"/>
    <property type="evidence" value="ECO:0000250"/>
    <property type="project" value="UniProtKB"/>
</dbReference>
<dbReference type="CDD" id="cd00184">
    <property type="entry name" value="TNF"/>
    <property type="match status" value="1"/>
</dbReference>
<dbReference type="FunFam" id="2.60.120.40:FF:000007">
    <property type="entry name" value="Tumor necrosis factor"/>
    <property type="match status" value="1"/>
</dbReference>
<dbReference type="Gene3D" id="2.60.120.40">
    <property type="match status" value="1"/>
</dbReference>
<dbReference type="InterPro" id="IPR006053">
    <property type="entry name" value="TNF"/>
</dbReference>
<dbReference type="InterPro" id="IPR002959">
    <property type="entry name" value="TNF_alpha"/>
</dbReference>
<dbReference type="InterPro" id="IPR021184">
    <property type="entry name" value="TNF_CS"/>
</dbReference>
<dbReference type="InterPro" id="IPR006052">
    <property type="entry name" value="TNF_dom"/>
</dbReference>
<dbReference type="InterPro" id="IPR008983">
    <property type="entry name" value="Tumour_necrosis_fac-like_dom"/>
</dbReference>
<dbReference type="PANTHER" id="PTHR11471:SF23">
    <property type="entry name" value="TUMOR NECROSIS FACTOR"/>
    <property type="match status" value="1"/>
</dbReference>
<dbReference type="PANTHER" id="PTHR11471">
    <property type="entry name" value="TUMOR NECROSIS FACTOR FAMILY MEMBER"/>
    <property type="match status" value="1"/>
</dbReference>
<dbReference type="Pfam" id="PF00229">
    <property type="entry name" value="TNF"/>
    <property type="match status" value="1"/>
</dbReference>
<dbReference type="PRINTS" id="PR01234">
    <property type="entry name" value="TNECROSISFCT"/>
</dbReference>
<dbReference type="PRINTS" id="PR01235">
    <property type="entry name" value="TNFALPHA"/>
</dbReference>
<dbReference type="SMART" id="SM00207">
    <property type="entry name" value="TNF"/>
    <property type="match status" value="1"/>
</dbReference>
<dbReference type="SUPFAM" id="SSF49842">
    <property type="entry name" value="TNF-like"/>
    <property type="match status" value="1"/>
</dbReference>
<dbReference type="PROSITE" id="PS00251">
    <property type="entry name" value="THD_1"/>
    <property type="match status" value="1"/>
</dbReference>
<dbReference type="PROSITE" id="PS50049">
    <property type="entry name" value="THD_2"/>
    <property type="match status" value="1"/>
</dbReference>
<feature type="chain" id="PRO_0000034417" description="Tumor necrosis factor, membrane form">
    <location>
        <begin position="1"/>
        <end position="233"/>
    </location>
</feature>
<feature type="chain" id="PRO_0000417219" description="Intracellular domain 1" evidence="1">
    <location>
        <begin position="1"/>
        <end position="39"/>
    </location>
</feature>
<feature type="chain" id="PRO_0000417220" description="Intracellular domain 2" evidence="1">
    <location>
        <begin position="1"/>
        <end position="35"/>
    </location>
</feature>
<feature type="chain" id="PRO_0000417221" description="C-domain 1" evidence="1">
    <location>
        <begin position="50"/>
        <end status="unknown"/>
    </location>
</feature>
<feature type="chain" id="PRO_0000417222" description="C-domain 2" evidence="1">
    <location>
        <begin position="52"/>
        <end status="unknown"/>
    </location>
</feature>
<feature type="chain" id="PRO_0000034418" description="Tumor necrosis factor, soluble form">
    <location>
        <begin position="78"/>
        <end position="233"/>
    </location>
</feature>
<feature type="topological domain" description="Cytoplasmic" evidence="4">
    <location>
        <begin position="1"/>
        <end position="35"/>
    </location>
</feature>
<feature type="transmembrane region" description="Helical; Signal-anchor for type II membrane protein" evidence="4">
    <location>
        <begin position="36"/>
        <end position="56"/>
    </location>
</feature>
<feature type="topological domain" description="Extracellular" evidence="4">
    <location>
        <begin position="57"/>
        <end position="233"/>
    </location>
</feature>
<feature type="domain" description="THD" evidence="5">
    <location>
        <begin position="88"/>
        <end position="233"/>
    </location>
</feature>
<feature type="site" description="Cleavage; by SPPL2A or SPPL2B" evidence="1">
    <location>
        <begin position="34"/>
        <end position="35"/>
    </location>
</feature>
<feature type="site" description="Cleavage; by SPPL2A or SPPL2B" evidence="1">
    <location>
        <begin position="49"/>
        <end position="50"/>
    </location>
</feature>
<feature type="site" description="Cleavage; by SPPL2A or SPPL2B" evidence="1">
    <location>
        <begin position="51"/>
        <end position="52"/>
    </location>
</feature>
<feature type="site" description="Cleavage; by ADAM17" evidence="1">
    <location>
        <begin position="77"/>
        <end position="78"/>
    </location>
</feature>
<feature type="modified residue" description="Phosphoserine; by CK1" evidence="1">
    <location>
        <position position="2"/>
    </location>
</feature>
<feature type="lipid moiety-binding region" description="N6-myristoyl lysine" evidence="2">
    <location>
        <position position="19"/>
    </location>
</feature>
<feature type="glycosylation site" description="O-linked (GalNAc...) serine; in soluble form" evidence="1">
    <location>
        <position position="80"/>
    </location>
</feature>
<feature type="glycosylation site" description="N-linked (GlcNAc...) asparagine" evidence="4">
    <location>
        <position position="95"/>
    </location>
</feature>
<feature type="disulfide bond" evidence="5">
    <location>
        <begin position="145"/>
        <end position="177"/>
    </location>
</feature>
<reference key="1">
    <citation type="journal article" date="2001" name="Can. J. Vet. Res.">
        <title>Molecular cloning and characterization of beluga whale (Delphinapterus leucas) interleukin-1beta and tumor necrosis factor-alpha.</title>
        <authorList>
            <person name="Denis F."/>
            <person name="Archambault D."/>
        </authorList>
    </citation>
    <scope>NUCLEOTIDE SEQUENCE [MRNA]</scope>
</reference>
<sequence length="233" mass="25420">MSTESMIRDVELAEEALSKTAGGSQGSGRCLCLSLFSFFLVAGGTTLFCLLHFGVIGPQREEFPTGYSIISPLAQTLRSSSKTSSNKPVAHVVANLSAQGQLRWLNTYANTLLANSVKLEDNQLVVPTDGLYLIYSQVLFRGQGCPSTHLFLTHTISRIAVSYQTKVNLLSAIKSPCQRETPEGAEAKPWYEPIYQGGVFQLEKGDRLSAEINLPDYLDFAESGQVYFGIIAL</sequence>
<protein>
    <recommendedName>
        <fullName>Tumor necrosis factor</fullName>
    </recommendedName>
    <alternativeName>
        <fullName>Cachectin</fullName>
    </alternativeName>
    <alternativeName>
        <fullName>TNF-alpha</fullName>
    </alternativeName>
    <alternativeName>
        <fullName>Tumor necrosis factor ligand superfamily member 2</fullName>
        <shortName>TNF-a</shortName>
    </alternativeName>
    <component>
        <recommendedName>
            <fullName>Tumor necrosis factor, membrane form</fullName>
        </recommendedName>
        <alternativeName>
            <fullName>N-terminal fragment</fullName>
            <shortName>NTF</shortName>
        </alternativeName>
    </component>
    <component>
        <recommendedName>
            <fullName>Intracellular domain 1</fullName>
            <shortName>ICD1</shortName>
        </recommendedName>
    </component>
    <component>
        <recommendedName>
            <fullName>Intracellular domain 2</fullName>
            <shortName>ICD2</shortName>
        </recommendedName>
    </component>
    <component>
        <recommendedName>
            <fullName>C-domain 1</fullName>
        </recommendedName>
    </component>
    <component>
        <recommendedName>
            <fullName>C-domain 2</fullName>
        </recommendedName>
    </component>
    <component>
        <recommendedName>
            <fullName>Tumor necrosis factor, soluble form</fullName>
        </recommendedName>
    </component>
</protein>
<name>TNFA_DELLE</name>
<keyword id="KW-1003">Cell membrane</keyword>
<keyword id="KW-0202">Cytokine</keyword>
<keyword id="KW-1015">Disulfide bond</keyword>
<keyword id="KW-0325">Glycoprotein</keyword>
<keyword id="KW-0449">Lipoprotein</keyword>
<keyword id="KW-0472">Membrane</keyword>
<keyword id="KW-0519">Myristate</keyword>
<keyword id="KW-0597">Phosphoprotein</keyword>
<keyword id="KW-1185">Reference proteome</keyword>
<keyword id="KW-0964">Secreted</keyword>
<keyword id="KW-0735">Signal-anchor</keyword>
<keyword id="KW-0812">Transmembrane</keyword>
<keyword id="KW-1133">Transmembrane helix</keyword>
<proteinExistence type="evidence at transcript level"/>
<organism>
    <name type="scientific">Delphinapterus leucas</name>
    <name type="common">Beluga whale</name>
    <dbReference type="NCBI Taxonomy" id="9749"/>
    <lineage>
        <taxon>Eukaryota</taxon>
        <taxon>Metazoa</taxon>
        <taxon>Chordata</taxon>
        <taxon>Craniata</taxon>
        <taxon>Vertebrata</taxon>
        <taxon>Euteleostomi</taxon>
        <taxon>Mammalia</taxon>
        <taxon>Eutheria</taxon>
        <taxon>Laurasiatheria</taxon>
        <taxon>Artiodactyla</taxon>
        <taxon>Whippomorpha</taxon>
        <taxon>Cetacea</taxon>
        <taxon>Odontoceti</taxon>
        <taxon>Monodontidae</taxon>
        <taxon>Delphinapterus</taxon>
    </lineage>
</organism>